<name>PH3_PRUSE</name>
<reference key="1">
    <citation type="journal article" date="1992" name="Plant Physiol.">
        <title>Prunus serotina amygdalin hydrolase and prunasin hydrolase: purification, N-terminal sequencing, and antibody production.</title>
        <authorList>
            <person name="Li C.P."/>
            <person name="Swain E."/>
            <person name="Poulton J.E."/>
        </authorList>
    </citation>
    <scope>PROTEIN SEQUENCE</scope>
    <source>
        <tissue>Seed</tissue>
    </source>
</reference>
<keyword id="KW-0903">Direct protein sequencing</keyword>
<keyword id="KW-0325">Glycoprotein</keyword>
<keyword id="KW-0326">Glycosidase</keyword>
<keyword id="KW-0378">Hydrolase</keyword>
<dbReference type="EC" id="3.2.1.118"/>
<dbReference type="GO" id="GO:0050224">
    <property type="term" value="F:prunasin beta-glucosidase activity"/>
    <property type="evidence" value="ECO:0007669"/>
    <property type="project" value="UniProtKB-EC"/>
</dbReference>
<accession>P29265</accession>
<proteinExistence type="evidence at protein level"/>
<organism>
    <name type="scientific">Prunus serotina</name>
    <name type="common">Black cherry</name>
    <dbReference type="NCBI Taxonomy" id="23207"/>
    <lineage>
        <taxon>Eukaryota</taxon>
        <taxon>Viridiplantae</taxon>
        <taxon>Streptophyta</taxon>
        <taxon>Embryophyta</taxon>
        <taxon>Tracheophyta</taxon>
        <taxon>Spermatophyta</taxon>
        <taxon>Magnoliopsida</taxon>
        <taxon>eudicotyledons</taxon>
        <taxon>Gunneridae</taxon>
        <taxon>Pentapetalae</taxon>
        <taxon>rosids</taxon>
        <taxon>fabids</taxon>
        <taxon>Rosales</taxon>
        <taxon>Rosaceae</taxon>
        <taxon>Amygdaloideae</taxon>
        <taxon>Amygdaleae</taxon>
        <taxon>Prunus</taxon>
    </lineage>
</organism>
<feature type="chain" id="PRO_0000058369" description="Prunasin beta-glucosidase 2B">
    <location>
        <begin position="1"/>
        <end position="15" status="greater than"/>
    </location>
</feature>
<feature type="non-terminal residue">
    <location>
        <position position="15"/>
    </location>
</feature>
<sequence>GTYPPVVLATLXRTH</sequence>
<protein>
    <recommendedName>
        <fullName>Prunasin beta-glucosidase 2B</fullName>
        <ecNumber>3.2.1.118</ecNumber>
    </recommendedName>
    <alternativeName>
        <fullName>Prunasin hydrolase isozyme IIB</fullName>
        <shortName>PH IIB</shortName>
    </alternativeName>
</protein>
<comment type="catalytic activity">
    <reaction>
        <text>(R)-prunasin + H2O = mandelonitrile + D-glucose</text>
        <dbReference type="Rhea" id="RHEA:16489"/>
        <dbReference type="ChEBI" id="CHEBI:4167"/>
        <dbReference type="ChEBI" id="CHEBI:15377"/>
        <dbReference type="ChEBI" id="CHEBI:16910"/>
        <dbReference type="ChEBI" id="CHEBI:17396"/>
        <dbReference type="EC" id="3.2.1.118"/>
    </reaction>
</comment>
<comment type="subunit">
    <text>Monomer.</text>
</comment>
<comment type="developmental stage">
    <text>Absent from maturing black cherry fruits until 6 weeks after flowering. Then, concomitant with cotyledon development, the level of enzyme increases with specificity for embryonal tissues.</text>
</comment>
<comment type="PTM">
    <text>Glycosylated.</text>
</comment>